<gene>
    <name type="primary">hupG</name>
</gene>
<evidence type="ECO:0000305" key="1"/>
<proteinExistence type="inferred from homology"/>
<sequence>MHDFHMPDTAPPSGKTHPLVARLTTEFGWPRLENAHDLREFTTRPGAHCLFVPGDAARNLETPDAAVVLPELRQAFQNAFDCAVVGDGIETELRETTRVLKTPSFLFFRDGDFLGGIEKIRDWDDYIARTSHILAAKG</sequence>
<reference key="1">
    <citation type="journal article" date="1993" name="Mol. Microbiol.">
        <title>Organization of the genes necessary for hydrogenase expression in Rhodobacter capsulatus. Sequence analysis and identification of two hyp regulatory mutants.</title>
        <authorList>
            <person name="Colbeau A."/>
            <person name="Richaud P."/>
            <person name="Toussaint B."/>
            <person name="Caballero F.J."/>
            <person name="Elster C."/>
            <person name="Delphin C."/>
            <person name="Smith R.L."/>
            <person name="Chabert J."/>
            <person name="Vignais P.M."/>
        </authorList>
    </citation>
    <scope>NUCLEOTIDE SEQUENCE [GENOMIC DNA]</scope>
    <source>
        <strain>ATCC 33303 / B10</strain>
    </source>
</reference>
<dbReference type="EMBL" id="Z15089">
    <property type="protein sequence ID" value="CAA78800.1"/>
    <property type="molecule type" value="Genomic_DNA"/>
</dbReference>
<dbReference type="PIR" id="S32943">
    <property type="entry name" value="S32943"/>
</dbReference>
<dbReference type="SMR" id="Q03006"/>
<dbReference type="OMA" id="HCLFIPG"/>
<dbReference type="CDD" id="cd02965">
    <property type="entry name" value="HyaE"/>
    <property type="match status" value="1"/>
</dbReference>
<dbReference type="Gene3D" id="3.40.30.10">
    <property type="entry name" value="Glutaredoxin"/>
    <property type="match status" value="1"/>
</dbReference>
<dbReference type="InterPro" id="IPR010893">
    <property type="entry name" value="NiFe-hyd_mat_HyaE"/>
</dbReference>
<dbReference type="InterPro" id="IPR036249">
    <property type="entry name" value="Thioredoxin-like_sf"/>
</dbReference>
<dbReference type="Pfam" id="PF07449">
    <property type="entry name" value="HyaE"/>
    <property type="match status" value="1"/>
</dbReference>
<dbReference type="PIRSF" id="PIRSF038934">
    <property type="entry name" value="HyaE_HupG"/>
    <property type="match status" value="1"/>
</dbReference>
<dbReference type="SUPFAM" id="SSF52833">
    <property type="entry name" value="Thioredoxin-like"/>
    <property type="match status" value="1"/>
</dbReference>
<feature type="chain" id="PRO_0000201413" description="Hydrogenase expression/formation protein HupG">
    <location>
        <begin position="1"/>
        <end position="138"/>
    </location>
</feature>
<organism>
    <name type="scientific">Rhodobacter capsulatus</name>
    <name type="common">Rhodopseudomonas capsulata</name>
    <dbReference type="NCBI Taxonomy" id="1061"/>
    <lineage>
        <taxon>Bacteria</taxon>
        <taxon>Pseudomonadati</taxon>
        <taxon>Pseudomonadota</taxon>
        <taxon>Alphaproteobacteria</taxon>
        <taxon>Rhodobacterales</taxon>
        <taxon>Rhodobacter group</taxon>
        <taxon>Rhodobacter</taxon>
    </lineage>
</organism>
<accession>Q03006</accession>
<comment type="similarity">
    <text evidence="1">Belongs to the HupG/HyaE family.</text>
</comment>
<protein>
    <recommendedName>
        <fullName>Hydrogenase expression/formation protein HupG</fullName>
    </recommendedName>
</protein>
<name>HUPG_RHOCA</name>